<comment type="subcellular location">
    <subcellularLocation>
        <location evidence="1">Membrane</location>
        <topology evidence="1">Single-pass membrane protein</topology>
    </subcellularLocation>
</comment>
<comment type="similarity">
    <text evidence="1">Belongs to the UPF0154 family.</text>
</comment>
<gene>
    <name type="ordered locus">OB1676</name>
</gene>
<keyword id="KW-0472">Membrane</keyword>
<keyword id="KW-1185">Reference proteome</keyword>
<keyword id="KW-0812">Transmembrane</keyword>
<keyword id="KW-1133">Transmembrane helix</keyword>
<name>Y1676_OCEIH</name>
<proteinExistence type="inferred from homology"/>
<evidence type="ECO:0000255" key="1">
    <source>
        <dbReference type="HAMAP-Rule" id="MF_00363"/>
    </source>
</evidence>
<accession>Q8EQL9</accession>
<protein>
    <recommendedName>
        <fullName evidence="1">UPF0154 protein OB1676</fullName>
    </recommendedName>
</protein>
<reference key="1">
    <citation type="journal article" date="2002" name="Nucleic Acids Res.">
        <title>Genome sequence of Oceanobacillus iheyensis isolated from the Iheya Ridge and its unexpected adaptive capabilities to extreme environments.</title>
        <authorList>
            <person name="Takami H."/>
            <person name="Takaki Y."/>
            <person name="Uchiyama I."/>
        </authorList>
    </citation>
    <scope>NUCLEOTIDE SEQUENCE [LARGE SCALE GENOMIC DNA]</scope>
    <source>
        <strain>DSM 14371 / CIP 107618 / JCM 11309 / KCTC 3954 / HTE831</strain>
    </source>
</reference>
<organism>
    <name type="scientific">Oceanobacillus iheyensis (strain DSM 14371 / CIP 107618 / JCM 11309 / KCTC 3954 / HTE831)</name>
    <dbReference type="NCBI Taxonomy" id="221109"/>
    <lineage>
        <taxon>Bacteria</taxon>
        <taxon>Bacillati</taxon>
        <taxon>Bacillota</taxon>
        <taxon>Bacilli</taxon>
        <taxon>Bacillales</taxon>
        <taxon>Bacillaceae</taxon>
        <taxon>Oceanobacillus</taxon>
    </lineage>
</organism>
<dbReference type="EMBL" id="BA000028">
    <property type="protein sequence ID" value="BAC13632.1"/>
    <property type="molecule type" value="Genomic_DNA"/>
</dbReference>
<dbReference type="RefSeq" id="WP_011066077.1">
    <property type="nucleotide sequence ID" value="NC_004193.1"/>
</dbReference>
<dbReference type="SMR" id="Q8EQL9"/>
<dbReference type="STRING" id="221109.gene:10733916"/>
<dbReference type="KEGG" id="oih:OB1676"/>
<dbReference type="eggNOG" id="COG3763">
    <property type="taxonomic scope" value="Bacteria"/>
</dbReference>
<dbReference type="HOGENOM" id="CLU_180108_0_1_9"/>
<dbReference type="OrthoDB" id="1769076at2"/>
<dbReference type="PhylomeDB" id="Q8EQL9"/>
<dbReference type="Proteomes" id="UP000000822">
    <property type="component" value="Chromosome"/>
</dbReference>
<dbReference type="GO" id="GO:0005886">
    <property type="term" value="C:plasma membrane"/>
    <property type="evidence" value="ECO:0007669"/>
    <property type="project" value="UniProtKB-UniRule"/>
</dbReference>
<dbReference type="HAMAP" id="MF_00363">
    <property type="entry name" value="UPF0154"/>
    <property type="match status" value="1"/>
</dbReference>
<dbReference type="InterPro" id="IPR005359">
    <property type="entry name" value="UPF0154"/>
</dbReference>
<dbReference type="NCBIfam" id="NF002503">
    <property type="entry name" value="PRK01844.1"/>
    <property type="match status" value="1"/>
</dbReference>
<dbReference type="Pfam" id="PF03672">
    <property type="entry name" value="UPF0154"/>
    <property type="match status" value="1"/>
</dbReference>
<feature type="chain" id="PRO_0000214972" description="UPF0154 protein OB1676">
    <location>
        <begin position="1"/>
        <end position="74"/>
    </location>
</feature>
<feature type="transmembrane region" description="Helical" evidence="1">
    <location>
        <begin position="4"/>
        <end position="24"/>
    </location>
</feature>
<sequence>MSTIWVVLIAIAALVAGVALGFFIARKYMMSYLKKNPPINEQMLRTLMMQMGQKPSQKKINQMMRAMNNQSGKE</sequence>